<proteinExistence type="evidence at transcript level"/>
<gene>
    <name evidence="6" type="primary">APP2</name>
    <name evidence="8" type="ordered locus">At3g05350</name>
    <name evidence="9" type="ORF">T12H1.32</name>
</gene>
<dbReference type="EC" id="3.4.11.9" evidence="1"/>
<dbReference type="EMBL" id="AC009177">
    <property type="protein sequence ID" value="AAF27041.1"/>
    <property type="status" value="ALT_SEQ"/>
    <property type="molecule type" value="Genomic_DNA"/>
</dbReference>
<dbReference type="EMBL" id="CP002686">
    <property type="protein sequence ID" value="AEE74224.1"/>
    <property type="molecule type" value="Genomic_DNA"/>
</dbReference>
<dbReference type="EMBL" id="AY079018">
    <property type="protein sequence ID" value="AAL84973.1"/>
    <property type="molecule type" value="mRNA"/>
</dbReference>
<dbReference type="EMBL" id="BT001080">
    <property type="protein sequence ID" value="AAN46861.1"/>
    <property type="molecule type" value="mRNA"/>
</dbReference>
<dbReference type="RefSeq" id="NP_187186.5">
    <property type="nucleotide sequence ID" value="NM_111408.7"/>
</dbReference>
<dbReference type="SMR" id="Q8RY11"/>
<dbReference type="FunCoup" id="Q8RY11">
    <property type="interactions" value="4205"/>
</dbReference>
<dbReference type="IntAct" id="Q8RY11">
    <property type="interactions" value="2"/>
</dbReference>
<dbReference type="STRING" id="3702.Q8RY11"/>
<dbReference type="MEROPS" id="M24.A04"/>
<dbReference type="PaxDb" id="3702-AT3G05350.1"/>
<dbReference type="ProteomicsDB" id="244479"/>
<dbReference type="EnsemblPlants" id="AT3G05350.1">
    <property type="protein sequence ID" value="AT3G05350.1"/>
    <property type="gene ID" value="AT3G05350"/>
</dbReference>
<dbReference type="GeneID" id="819699"/>
<dbReference type="Gramene" id="AT3G05350.1">
    <property type="protein sequence ID" value="AT3G05350.1"/>
    <property type="gene ID" value="AT3G05350"/>
</dbReference>
<dbReference type="KEGG" id="ath:AT3G05350"/>
<dbReference type="Araport" id="AT3G05350"/>
<dbReference type="TAIR" id="AT3G05350"/>
<dbReference type="eggNOG" id="KOG2413">
    <property type="taxonomic scope" value="Eukaryota"/>
</dbReference>
<dbReference type="HOGENOM" id="CLU_011781_2_1_1"/>
<dbReference type="InParanoid" id="Q8RY11"/>
<dbReference type="OMA" id="EPGMILS"/>
<dbReference type="PhylomeDB" id="Q8RY11"/>
<dbReference type="PRO" id="PR:Q8RY11"/>
<dbReference type="Proteomes" id="UP000006548">
    <property type="component" value="Chromosome 3"/>
</dbReference>
<dbReference type="ExpressionAtlas" id="Q8RY11">
    <property type="expression patterns" value="baseline and differential"/>
</dbReference>
<dbReference type="GO" id="GO:0009507">
    <property type="term" value="C:chloroplast"/>
    <property type="evidence" value="ECO:0007005"/>
    <property type="project" value="TAIR"/>
</dbReference>
<dbReference type="GO" id="GO:0009570">
    <property type="term" value="C:chloroplast stroma"/>
    <property type="evidence" value="ECO:0007005"/>
    <property type="project" value="TAIR"/>
</dbReference>
<dbReference type="GO" id="GO:0005829">
    <property type="term" value="C:cytosol"/>
    <property type="evidence" value="ECO:0007005"/>
    <property type="project" value="TAIR"/>
</dbReference>
<dbReference type="GO" id="GO:0046872">
    <property type="term" value="F:metal ion binding"/>
    <property type="evidence" value="ECO:0007669"/>
    <property type="project" value="UniProtKB-KW"/>
</dbReference>
<dbReference type="GO" id="GO:0070006">
    <property type="term" value="F:metalloaminopeptidase activity"/>
    <property type="evidence" value="ECO:0007669"/>
    <property type="project" value="InterPro"/>
</dbReference>
<dbReference type="GO" id="GO:0006508">
    <property type="term" value="P:proteolysis"/>
    <property type="evidence" value="ECO:0007669"/>
    <property type="project" value="UniProtKB-KW"/>
</dbReference>
<dbReference type="CDD" id="cd01085">
    <property type="entry name" value="APP"/>
    <property type="match status" value="1"/>
</dbReference>
<dbReference type="FunFam" id="3.40.350.10:FF:000014">
    <property type="entry name" value="Aminopeptidase P2"/>
    <property type="match status" value="1"/>
</dbReference>
<dbReference type="FunFam" id="3.90.230.10:FF:000007">
    <property type="entry name" value="Xaa-Pro aminopeptidase P"/>
    <property type="match status" value="1"/>
</dbReference>
<dbReference type="FunFam" id="3.40.350.10:FF:000003">
    <property type="entry name" value="Xaa-pro aminopeptidase P"/>
    <property type="match status" value="1"/>
</dbReference>
<dbReference type="Gene3D" id="3.90.230.10">
    <property type="entry name" value="Creatinase/methionine aminopeptidase superfamily"/>
    <property type="match status" value="1"/>
</dbReference>
<dbReference type="Gene3D" id="3.40.350.10">
    <property type="entry name" value="Creatinase/prolidase N-terminal domain"/>
    <property type="match status" value="2"/>
</dbReference>
<dbReference type="InterPro" id="IPR029149">
    <property type="entry name" value="Creatin/AminoP/Spt16_N"/>
</dbReference>
<dbReference type="InterPro" id="IPR036005">
    <property type="entry name" value="Creatinase/aminopeptidase-like"/>
</dbReference>
<dbReference type="InterPro" id="IPR000587">
    <property type="entry name" value="Creatinase_N"/>
</dbReference>
<dbReference type="InterPro" id="IPR000994">
    <property type="entry name" value="Pept_M24"/>
</dbReference>
<dbReference type="InterPro" id="IPR033740">
    <property type="entry name" value="Pept_M24B"/>
</dbReference>
<dbReference type="InterPro" id="IPR032416">
    <property type="entry name" value="Peptidase_M24_C"/>
</dbReference>
<dbReference type="InterPro" id="IPR050422">
    <property type="entry name" value="X-Pro_aminopeptidase_P"/>
</dbReference>
<dbReference type="PANTHER" id="PTHR43763">
    <property type="entry name" value="XAA-PRO AMINOPEPTIDASE 1"/>
    <property type="match status" value="1"/>
</dbReference>
<dbReference type="PANTHER" id="PTHR43763:SF6">
    <property type="entry name" value="XAA-PRO AMINOPEPTIDASE 1"/>
    <property type="match status" value="1"/>
</dbReference>
<dbReference type="Pfam" id="PF01321">
    <property type="entry name" value="Creatinase_N"/>
    <property type="match status" value="1"/>
</dbReference>
<dbReference type="Pfam" id="PF16189">
    <property type="entry name" value="Creatinase_N_2"/>
    <property type="match status" value="1"/>
</dbReference>
<dbReference type="Pfam" id="PF00557">
    <property type="entry name" value="Peptidase_M24"/>
    <property type="match status" value="1"/>
</dbReference>
<dbReference type="Pfam" id="PF16188">
    <property type="entry name" value="Peptidase_M24_C"/>
    <property type="match status" value="1"/>
</dbReference>
<dbReference type="SUPFAM" id="SSF55920">
    <property type="entry name" value="Creatinase/aminopeptidase"/>
    <property type="match status" value="1"/>
</dbReference>
<dbReference type="SUPFAM" id="SSF53092">
    <property type="entry name" value="Creatinase/prolidase N-terminal domain"/>
    <property type="match status" value="1"/>
</dbReference>
<reference key="1">
    <citation type="journal article" date="2002" name="Plant Physiol.">
        <title>Identification, purification, and molecular cloning of N-1-naphthylphthalmic acid-binding plasma membrane-associated aminopeptidases from Arabidopsis.</title>
        <authorList>
            <person name="Murphy A.S."/>
            <person name="Hoogner K.R."/>
            <person name="Peer W.A."/>
            <person name="Taiz L."/>
        </authorList>
    </citation>
    <scope>GENE FAMILY</scope>
    <scope>NOMENCLATURE</scope>
    <source>
        <strain>cv. Columbia</strain>
    </source>
</reference>
<reference key="2">
    <citation type="journal article" date="2000" name="Nature">
        <title>Sequence and analysis of chromosome 3 of the plant Arabidopsis thaliana.</title>
        <authorList>
            <person name="Salanoubat M."/>
            <person name="Lemcke K."/>
            <person name="Rieger M."/>
            <person name="Ansorge W."/>
            <person name="Unseld M."/>
            <person name="Fartmann B."/>
            <person name="Valle G."/>
            <person name="Bloecker H."/>
            <person name="Perez-Alonso M."/>
            <person name="Obermaier B."/>
            <person name="Delseny M."/>
            <person name="Boutry M."/>
            <person name="Grivell L.A."/>
            <person name="Mache R."/>
            <person name="Puigdomenech P."/>
            <person name="De Simone V."/>
            <person name="Choisne N."/>
            <person name="Artiguenave F."/>
            <person name="Robert C."/>
            <person name="Brottier P."/>
            <person name="Wincker P."/>
            <person name="Cattolico L."/>
            <person name="Weissenbach J."/>
            <person name="Saurin W."/>
            <person name="Quetier F."/>
            <person name="Schaefer M."/>
            <person name="Mueller-Auer S."/>
            <person name="Gabel C."/>
            <person name="Fuchs M."/>
            <person name="Benes V."/>
            <person name="Wurmbach E."/>
            <person name="Drzonek H."/>
            <person name="Erfle H."/>
            <person name="Jordan N."/>
            <person name="Bangert S."/>
            <person name="Wiedelmann R."/>
            <person name="Kranz H."/>
            <person name="Voss H."/>
            <person name="Holland R."/>
            <person name="Brandt P."/>
            <person name="Nyakatura G."/>
            <person name="Vezzi A."/>
            <person name="D'Angelo M."/>
            <person name="Pallavicini A."/>
            <person name="Toppo S."/>
            <person name="Simionati B."/>
            <person name="Conrad A."/>
            <person name="Hornischer K."/>
            <person name="Kauer G."/>
            <person name="Loehnert T.-H."/>
            <person name="Nordsiek G."/>
            <person name="Reichelt J."/>
            <person name="Scharfe M."/>
            <person name="Schoen O."/>
            <person name="Bargues M."/>
            <person name="Terol J."/>
            <person name="Climent J."/>
            <person name="Navarro P."/>
            <person name="Collado C."/>
            <person name="Perez-Perez A."/>
            <person name="Ottenwaelder B."/>
            <person name="Duchemin D."/>
            <person name="Cooke R."/>
            <person name="Laudie M."/>
            <person name="Berger-Llauro C."/>
            <person name="Purnelle B."/>
            <person name="Masuy D."/>
            <person name="de Haan M."/>
            <person name="Maarse A.C."/>
            <person name="Alcaraz J.-P."/>
            <person name="Cottet A."/>
            <person name="Casacuberta E."/>
            <person name="Monfort A."/>
            <person name="Argiriou A."/>
            <person name="Flores M."/>
            <person name="Liguori R."/>
            <person name="Vitale D."/>
            <person name="Mannhaupt G."/>
            <person name="Haase D."/>
            <person name="Schoof H."/>
            <person name="Rudd S."/>
            <person name="Zaccaria P."/>
            <person name="Mewes H.-W."/>
            <person name="Mayer K.F.X."/>
            <person name="Kaul S."/>
            <person name="Town C.D."/>
            <person name="Koo H.L."/>
            <person name="Tallon L.J."/>
            <person name="Jenkins J."/>
            <person name="Rooney T."/>
            <person name="Rizzo M."/>
            <person name="Walts A."/>
            <person name="Utterback T."/>
            <person name="Fujii C.Y."/>
            <person name="Shea T.P."/>
            <person name="Creasy T.H."/>
            <person name="Haas B."/>
            <person name="Maiti R."/>
            <person name="Wu D."/>
            <person name="Peterson J."/>
            <person name="Van Aken S."/>
            <person name="Pai G."/>
            <person name="Militscher J."/>
            <person name="Sellers P."/>
            <person name="Gill J.E."/>
            <person name="Feldblyum T.V."/>
            <person name="Preuss D."/>
            <person name="Lin X."/>
            <person name="Nierman W.C."/>
            <person name="Salzberg S.L."/>
            <person name="White O."/>
            <person name="Venter J.C."/>
            <person name="Fraser C.M."/>
            <person name="Kaneko T."/>
            <person name="Nakamura Y."/>
            <person name="Sato S."/>
            <person name="Kato T."/>
            <person name="Asamizu E."/>
            <person name="Sasamoto S."/>
            <person name="Kimura T."/>
            <person name="Idesawa K."/>
            <person name="Kawashima K."/>
            <person name="Kishida Y."/>
            <person name="Kiyokawa C."/>
            <person name="Kohara M."/>
            <person name="Matsumoto M."/>
            <person name="Matsuno A."/>
            <person name="Muraki A."/>
            <person name="Nakayama S."/>
            <person name="Nakazaki N."/>
            <person name="Shinpo S."/>
            <person name="Takeuchi C."/>
            <person name="Wada T."/>
            <person name="Watanabe A."/>
            <person name="Yamada M."/>
            <person name="Yasuda M."/>
            <person name="Tabata S."/>
        </authorList>
    </citation>
    <scope>NUCLEOTIDE SEQUENCE [LARGE SCALE GENOMIC DNA]</scope>
    <source>
        <strain>cv. Columbia</strain>
    </source>
</reference>
<reference key="3">
    <citation type="journal article" date="2017" name="Plant J.">
        <title>Araport11: a complete reannotation of the Arabidopsis thaliana reference genome.</title>
        <authorList>
            <person name="Cheng C.Y."/>
            <person name="Krishnakumar V."/>
            <person name="Chan A.P."/>
            <person name="Thibaud-Nissen F."/>
            <person name="Schobel S."/>
            <person name="Town C.D."/>
        </authorList>
    </citation>
    <scope>GENOME REANNOTATION</scope>
    <source>
        <strain>cv. Columbia</strain>
    </source>
</reference>
<reference key="4">
    <citation type="journal article" date="2003" name="Science">
        <title>Empirical analysis of transcriptional activity in the Arabidopsis genome.</title>
        <authorList>
            <person name="Yamada K."/>
            <person name="Lim J."/>
            <person name="Dale J.M."/>
            <person name="Chen H."/>
            <person name="Shinn P."/>
            <person name="Palm C.J."/>
            <person name="Southwick A.M."/>
            <person name="Wu H.C."/>
            <person name="Kim C.J."/>
            <person name="Nguyen M."/>
            <person name="Pham P.K."/>
            <person name="Cheuk R.F."/>
            <person name="Karlin-Newmann G."/>
            <person name="Liu S.X."/>
            <person name="Lam B."/>
            <person name="Sakano H."/>
            <person name="Wu T."/>
            <person name="Yu G."/>
            <person name="Miranda M."/>
            <person name="Quach H.L."/>
            <person name="Tripp M."/>
            <person name="Chang C.H."/>
            <person name="Lee J.M."/>
            <person name="Toriumi M.J."/>
            <person name="Chan M.M."/>
            <person name="Tang C.C."/>
            <person name="Onodera C.S."/>
            <person name="Deng J.M."/>
            <person name="Akiyama K."/>
            <person name="Ansari Y."/>
            <person name="Arakawa T."/>
            <person name="Banh J."/>
            <person name="Banno F."/>
            <person name="Bowser L."/>
            <person name="Brooks S.Y."/>
            <person name="Carninci P."/>
            <person name="Chao Q."/>
            <person name="Choy N."/>
            <person name="Enju A."/>
            <person name="Goldsmith A.D."/>
            <person name="Gurjal M."/>
            <person name="Hansen N.F."/>
            <person name="Hayashizaki Y."/>
            <person name="Johnson-Hopson C."/>
            <person name="Hsuan V.W."/>
            <person name="Iida K."/>
            <person name="Karnes M."/>
            <person name="Khan S."/>
            <person name="Koesema E."/>
            <person name="Ishida J."/>
            <person name="Jiang P.X."/>
            <person name="Jones T."/>
            <person name="Kawai J."/>
            <person name="Kamiya A."/>
            <person name="Meyers C."/>
            <person name="Nakajima M."/>
            <person name="Narusaka M."/>
            <person name="Seki M."/>
            <person name="Sakurai T."/>
            <person name="Satou M."/>
            <person name="Tamse R."/>
            <person name="Vaysberg M."/>
            <person name="Wallender E.K."/>
            <person name="Wong C."/>
            <person name="Yamamura Y."/>
            <person name="Yuan S."/>
            <person name="Shinozaki K."/>
            <person name="Davis R.W."/>
            <person name="Theologis A."/>
            <person name="Ecker J.R."/>
        </authorList>
    </citation>
    <scope>NUCLEOTIDE SEQUENCE [LARGE SCALE MRNA]</scope>
    <source>
        <strain>cv. Columbia</strain>
    </source>
</reference>
<name>AMPP2_ARATH</name>
<sequence length="710" mass="78709">MIPLTLSSPSLNRLVLSTSRYSHSLFLSNFNSLSLIHRKLPYKPLFGARCHASSSSSSSSSFTAKSSKEIRKAQTKVVVDEKLSSIRRLFSEPGVGIDAYIIPSQDAHQSEFIAECYARRAYISGFTGSAGTAVVTKDKAALWTDGRYFLQAEKQLNSSWILMRAGNPGVPTASEWIADVLAPGGRVGIDPFLFSADAAEELKEVIAKKNHELVYLYNVNLVDEIWKDSRPKPPSRQIRIHDLKYAGLDVASKLLSLRNQIMDAGTSAIVISMLDEIAWVLNLRGSDVPHSPVMYAYLIVEVDQAQLFVDNSKVTVEVKDHLKNAGIELRPYDSILQGIDSLAARGAQLLMDPSTLNVAIISTYKSACERYSRNFESEAKVKTKFTDSSSGYTANPSGIYMQSPISWAKAIKNDAELKGMKNSHLRDAAALAHFWAWLEEEVHKNANLTEVDVADRLLEFRSMQDGFMDTSFDTISGSGANGAIIHYKPEPESCSRVDPQKLFLLDSGAQYVDGTTDITRTVHFSEPSAREKECFTRVLQGHIALDQAVFPEGTPGFVLDGFARSSLWKIGLDYRHGTGHGVGAALNVHEGPQSISFRYGNMTPLQNGMIVSNEPGYYEDHAFGIRIENLLHVRDAETPNRFGGATYLGFEKLTFFPIQTKMVDVSLLSDTEVDWLNSYHAEVWEKVSPLLEGSTTQQWLWNNTRPLAKP</sequence>
<protein>
    <recommendedName>
        <fullName evidence="6">Aminopeptidase P2</fullName>
        <shortName evidence="6">AtAPP2</shortName>
        <ecNumber evidence="1">3.4.11.9</ecNumber>
    </recommendedName>
</protein>
<accession>Q8RY11</accession>
<accession>Q9MA84</accession>
<feature type="transit peptide" description="Chloroplast" evidence="5">
    <location>
        <begin position="1"/>
        <end position="79"/>
    </location>
</feature>
<feature type="chain" id="PRO_0000444156" description="Aminopeptidase P2">
    <location>
        <begin position="80"/>
        <end position="710"/>
    </location>
</feature>
<feature type="binding site" evidence="2">
    <location>
        <position position="147"/>
    </location>
    <ligand>
        <name>a peptide</name>
        <dbReference type="ChEBI" id="CHEBI:60466"/>
    </ligand>
</feature>
<feature type="binding site" evidence="2">
    <location>
        <position position="486"/>
    </location>
    <ligand>
        <name>a peptide</name>
        <dbReference type="ChEBI" id="CHEBI:60466"/>
    </ligand>
</feature>
<feature type="binding site" evidence="3">
    <location>
        <position position="506"/>
    </location>
    <ligand>
        <name>Mn(2+)</name>
        <dbReference type="ChEBI" id="CHEBI:29035"/>
        <label>1</label>
    </ligand>
</feature>
<feature type="binding site" evidence="3">
    <location>
        <position position="517"/>
    </location>
    <ligand>
        <name>Mn(2+)</name>
        <dbReference type="ChEBI" id="CHEBI:29035"/>
        <label>1</label>
    </ligand>
</feature>
<feature type="binding site" evidence="3">
    <location>
        <position position="517"/>
    </location>
    <ligand>
        <name>Mn(2+)</name>
        <dbReference type="ChEBI" id="CHEBI:29035"/>
        <label>2</label>
    </ligand>
</feature>
<feature type="binding site" evidence="2">
    <location>
        <position position="580"/>
    </location>
    <ligand>
        <name>a peptide</name>
        <dbReference type="ChEBI" id="CHEBI:60466"/>
    </ligand>
</feature>
<feature type="binding site" evidence="3">
    <location>
        <position position="580"/>
    </location>
    <ligand>
        <name>Mn(2+)</name>
        <dbReference type="ChEBI" id="CHEBI:29035"/>
        <label>2</label>
    </ligand>
</feature>
<feature type="binding site" evidence="2">
    <location>
        <position position="589"/>
    </location>
    <ligand>
        <name>a peptide</name>
        <dbReference type="ChEBI" id="CHEBI:60466"/>
    </ligand>
</feature>
<feature type="binding site" evidence="2">
    <location>
        <position position="614"/>
    </location>
    <ligand>
        <name>a peptide</name>
        <dbReference type="ChEBI" id="CHEBI:60466"/>
    </ligand>
</feature>
<feature type="binding site" evidence="3">
    <location>
        <position position="614"/>
    </location>
    <ligand>
        <name>Mn(2+)</name>
        <dbReference type="ChEBI" id="CHEBI:29035"/>
        <label>2</label>
    </ligand>
</feature>
<feature type="binding site" evidence="3">
    <location>
        <position position="628"/>
    </location>
    <ligand>
        <name>Mn(2+)</name>
        <dbReference type="ChEBI" id="CHEBI:29035"/>
        <label>1</label>
    </ligand>
</feature>
<feature type="binding site" evidence="3">
    <location>
        <position position="628"/>
    </location>
    <ligand>
        <name>Mn(2+)</name>
        <dbReference type="ChEBI" id="CHEBI:29035"/>
        <label>2</label>
    </ligand>
</feature>
<keyword id="KW-0031">Aminopeptidase</keyword>
<keyword id="KW-0150">Chloroplast</keyword>
<keyword id="KW-0378">Hydrolase</keyword>
<keyword id="KW-0464">Manganese</keyword>
<keyword id="KW-0479">Metal-binding</keyword>
<keyword id="KW-0482">Metalloprotease</keyword>
<keyword id="KW-0934">Plastid</keyword>
<keyword id="KW-0645">Protease</keyword>
<keyword id="KW-1185">Reference proteome</keyword>
<keyword id="KW-0809">Transit peptide</keyword>
<evidence type="ECO:0000250" key="1">
    <source>
        <dbReference type="UniProtKB" id="F4JQH3"/>
    </source>
</evidence>
<evidence type="ECO:0000250" key="2">
    <source>
        <dbReference type="UniProtKB" id="O44750"/>
    </source>
</evidence>
<evidence type="ECO:0000250" key="3">
    <source>
        <dbReference type="UniProtKB" id="Q9NQW7"/>
    </source>
</evidence>
<evidence type="ECO:0000250" key="4">
    <source>
        <dbReference type="UniProtKB" id="Q9VJG0"/>
    </source>
</evidence>
<evidence type="ECO:0000255" key="5"/>
<evidence type="ECO:0000303" key="6">
    <source>
    </source>
</evidence>
<evidence type="ECO:0000305" key="7"/>
<evidence type="ECO:0000312" key="8">
    <source>
        <dbReference type="Araport" id="AT3G05350"/>
    </source>
</evidence>
<evidence type="ECO:0000312" key="9">
    <source>
        <dbReference type="EMBL" id="AAF27041.1"/>
    </source>
</evidence>
<comment type="function">
    <text evidence="4">Catalyzes the removal of a penultimate prolyl residue from the N-termini of peptides, such as Arg-Pro-Pro.</text>
</comment>
<comment type="catalytic activity">
    <reaction evidence="1">
        <text>Release of any N-terminal amino acid, including proline, that is linked to proline, even from a dipeptide or tripeptide.</text>
        <dbReference type="EC" id="3.4.11.9"/>
    </reaction>
</comment>
<comment type="cofactor">
    <cofactor evidence="3">
        <name>Mn(2+)</name>
        <dbReference type="ChEBI" id="CHEBI:29035"/>
    </cofactor>
    <text evidence="3">Binds 2 manganese ions per subunit.</text>
</comment>
<comment type="subunit">
    <text evidence="3">Homodimer.</text>
</comment>
<comment type="subcellular location">
    <subcellularLocation>
        <location evidence="5">Plastid</location>
        <location evidence="5">Chloroplast</location>
    </subcellularLocation>
</comment>
<comment type="similarity">
    <text evidence="7">Belongs to the peptidase M24B family.</text>
</comment>
<comment type="sequence caution" evidence="7">
    <conflict type="erroneous gene model prediction">
        <sequence resource="EMBL-CDS" id="AAF27041"/>
    </conflict>
</comment>
<organism>
    <name type="scientific">Arabidopsis thaliana</name>
    <name type="common">Mouse-ear cress</name>
    <dbReference type="NCBI Taxonomy" id="3702"/>
    <lineage>
        <taxon>Eukaryota</taxon>
        <taxon>Viridiplantae</taxon>
        <taxon>Streptophyta</taxon>
        <taxon>Embryophyta</taxon>
        <taxon>Tracheophyta</taxon>
        <taxon>Spermatophyta</taxon>
        <taxon>Magnoliopsida</taxon>
        <taxon>eudicotyledons</taxon>
        <taxon>Gunneridae</taxon>
        <taxon>Pentapetalae</taxon>
        <taxon>rosids</taxon>
        <taxon>malvids</taxon>
        <taxon>Brassicales</taxon>
        <taxon>Brassicaceae</taxon>
        <taxon>Camelineae</taxon>
        <taxon>Arabidopsis</taxon>
    </lineage>
</organism>